<organism>
    <name type="scientific">Shigella flexneri</name>
    <dbReference type="NCBI Taxonomy" id="623"/>
    <lineage>
        <taxon>Bacteria</taxon>
        <taxon>Pseudomonadati</taxon>
        <taxon>Pseudomonadota</taxon>
        <taxon>Gammaproteobacteria</taxon>
        <taxon>Enterobacterales</taxon>
        <taxon>Enterobacteriaceae</taxon>
        <taxon>Shigella</taxon>
    </lineage>
</organism>
<proteinExistence type="inferred from homology"/>
<protein>
    <recommendedName>
        <fullName evidence="1">tRNA-2-methylthio-N(6)-dimethylallyladenosine synthase</fullName>
        <ecNumber evidence="1">2.8.4.3</ecNumber>
    </recommendedName>
    <alternativeName>
        <fullName evidence="1">(Dimethylallyl)adenosine tRNA methylthiotransferase MiaB</fullName>
    </alternativeName>
    <alternativeName>
        <fullName evidence="1">tRNA-i(6)A37 methylthiotransferase</fullName>
    </alternativeName>
</protein>
<evidence type="ECO:0000255" key="1">
    <source>
        <dbReference type="HAMAP-Rule" id="MF_01864"/>
    </source>
</evidence>
<evidence type="ECO:0000255" key="2">
    <source>
        <dbReference type="PROSITE-ProRule" id="PRU01266"/>
    </source>
</evidence>
<name>MIAB_SHIFL</name>
<dbReference type="EC" id="2.8.4.3" evidence="1"/>
<dbReference type="EMBL" id="AE005674">
    <property type="protein sequence ID" value="AAN42258.1"/>
    <property type="molecule type" value="Genomic_DNA"/>
</dbReference>
<dbReference type="EMBL" id="AE014073">
    <property type="protein sequence ID" value="AAP16129.1"/>
    <property type="molecule type" value="Genomic_DNA"/>
</dbReference>
<dbReference type="RefSeq" id="WP_000162739.1">
    <property type="nucleotide sequence ID" value="NZ_WPGW01000002.1"/>
</dbReference>
<dbReference type="SMR" id="Q83LY3"/>
<dbReference type="STRING" id="198214.SF0621"/>
<dbReference type="PaxDb" id="198214-SF0621"/>
<dbReference type="KEGG" id="sfl:SF0621"/>
<dbReference type="KEGG" id="sfx:S0643"/>
<dbReference type="PATRIC" id="fig|198214.7.peg.726"/>
<dbReference type="HOGENOM" id="CLU_018697_2_0_6"/>
<dbReference type="Proteomes" id="UP000001006">
    <property type="component" value="Chromosome"/>
</dbReference>
<dbReference type="Proteomes" id="UP000002673">
    <property type="component" value="Chromosome"/>
</dbReference>
<dbReference type="GO" id="GO:0005829">
    <property type="term" value="C:cytosol"/>
    <property type="evidence" value="ECO:0007669"/>
    <property type="project" value="TreeGrafter"/>
</dbReference>
<dbReference type="GO" id="GO:0051539">
    <property type="term" value="F:4 iron, 4 sulfur cluster binding"/>
    <property type="evidence" value="ECO:0007669"/>
    <property type="project" value="UniProtKB-UniRule"/>
</dbReference>
<dbReference type="GO" id="GO:0046872">
    <property type="term" value="F:metal ion binding"/>
    <property type="evidence" value="ECO:0007669"/>
    <property type="project" value="UniProtKB-KW"/>
</dbReference>
<dbReference type="GO" id="GO:0035597">
    <property type="term" value="F:N6-isopentenyladenosine methylthiotransferase activity"/>
    <property type="evidence" value="ECO:0007669"/>
    <property type="project" value="TreeGrafter"/>
</dbReference>
<dbReference type="CDD" id="cd01335">
    <property type="entry name" value="Radical_SAM"/>
    <property type="match status" value="1"/>
</dbReference>
<dbReference type="FunFam" id="3.40.50.12160:FF:000001">
    <property type="entry name" value="tRNA-2-methylthio-N(6)-dimethylallyladenosine synthase"/>
    <property type="match status" value="1"/>
</dbReference>
<dbReference type="FunFam" id="3.80.30.20:FF:000001">
    <property type="entry name" value="tRNA-2-methylthio-N(6)-dimethylallyladenosine synthase 2"/>
    <property type="match status" value="1"/>
</dbReference>
<dbReference type="Gene3D" id="3.40.50.12160">
    <property type="entry name" value="Methylthiotransferase, N-terminal domain"/>
    <property type="match status" value="1"/>
</dbReference>
<dbReference type="Gene3D" id="3.80.30.20">
    <property type="entry name" value="tm_1862 like domain"/>
    <property type="match status" value="1"/>
</dbReference>
<dbReference type="HAMAP" id="MF_01864">
    <property type="entry name" value="tRNA_metthiotr_MiaB"/>
    <property type="match status" value="1"/>
</dbReference>
<dbReference type="InterPro" id="IPR006638">
    <property type="entry name" value="Elp3/MiaA/NifB-like_rSAM"/>
</dbReference>
<dbReference type="InterPro" id="IPR005839">
    <property type="entry name" value="Methylthiotransferase"/>
</dbReference>
<dbReference type="InterPro" id="IPR020612">
    <property type="entry name" value="Methylthiotransferase_CS"/>
</dbReference>
<dbReference type="InterPro" id="IPR013848">
    <property type="entry name" value="Methylthiotransferase_N"/>
</dbReference>
<dbReference type="InterPro" id="IPR038135">
    <property type="entry name" value="Methylthiotransferase_N_sf"/>
</dbReference>
<dbReference type="InterPro" id="IPR006463">
    <property type="entry name" value="MiaB_methiolase"/>
</dbReference>
<dbReference type="InterPro" id="IPR007197">
    <property type="entry name" value="rSAM"/>
</dbReference>
<dbReference type="InterPro" id="IPR023404">
    <property type="entry name" value="rSAM_horseshoe"/>
</dbReference>
<dbReference type="InterPro" id="IPR002792">
    <property type="entry name" value="TRAM_dom"/>
</dbReference>
<dbReference type="NCBIfam" id="TIGR01574">
    <property type="entry name" value="miaB-methiolase"/>
    <property type="match status" value="1"/>
</dbReference>
<dbReference type="NCBIfam" id="TIGR00089">
    <property type="entry name" value="MiaB/RimO family radical SAM methylthiotransferase"/>
    <property type="match status" value="1"/>
</dbReference>
<dbReference type="PANTHER" id="PTHR43020">
    <property type="entry name" value="CDK5 REGULATORY SUBUNIT-ASSOCIATED PROTEIN 1"/>
    <property type="match status" value="1"/>
</dbReference>
<dbReference type="PANTHER" id="PTHR43020:SF2">
    <property type="entry name" value="MITOCHONDRIAL TRNA METHYLTHIOTRANSFERASE CDK5RAP1"/>
    <property type="match status" value="1"/>
</dbReference>
<dbReference type="Pfam" id="PF04055">
    <property type="entry name" value="Radical_SAM"/>
    <property type="match status" value="1"/>
</dbReference>
<dbReference type="Pfam" id="PF01938">
    <property type="entry name" value="TRAM"/>
    <property type="match status" value="1"/>
</dbReference>
<dbReference type="Pfam" id="PF00919">
    <property type="entry name" value="UPF0004"/>
    <property type="match status" value="1"/>
</dbReference>
<dbReference type="SFLD" id="SFLDF00273">
    <property type="entry name" value="(dimethylallyl)adenosine_tRNA"/>
    <property type="match status" value="1"/>
</dbReference>
<dbReference type="SFLD" id="SFLDG01082">
    <property type="entry name" value="B12-binding_domain_containing"/>
    <property type="match status" value="1"/>
</dbReference>
<dbReference type="SFLD" id="SFLDS00029">
    <property type="entry name" value="Radical_SAM"/>
    <property type="match status" value="1"/>
</dbReference>
<dbReference type="SMART" id="SM00729">
    <property type="entry name" value="Elp3"/>
    <property type="match status" value="1"/>
</dbReference>
<dbReference type="SUPFAM" id="SSF102114">
    <property type="entry name" value="Radical SAM enzymes"/>
    <property type="match status" value="1"/>
</dbReference>
<dbReference type="PROSITE" id="PS51449">
    <property type="entry name" value="MTTASE_N"/>
    <property type="match status" value="1"/>
</dbReference>
<dbReference type="PROSITE" id="PS01278">
    <property type="entry name" value="MTTASE_RADICAL"/>
    <property type="match status" value="1"/>
</dbReference>
<dbReference type="PROSITE" id="PS51918">
    <property type="entry name" value="RADICAL_SAM"/>
    <property type="match status" value="1"/>
</dbReference>
<dbReference type="PROSITE" id="PS50926">
    <property type="entry name" value="TRAM"/>
    <property type="match status" value="1"/>
</dbReference>
<sequence>MTKKLHIKTWGCQMNEYDSSKMADLLDATHGYQLTDVAEEADVLLLNTCSIREKAQEKVFHQLGRWKLLKEKNPDLIIGVGGCVASQEGEHIRQRAHYVDIIFGPQTLHRLPEMINSVRGDRSPVVDISFPEIEKFDRLPEPRAEGPTAFVSIMEGCNKYCTYCVVPYTRGEEVSRPSDDILFEIAQLAAQGVREVNLLGQNVNAWRGENYDGTTGSFADLLRLVAAIDGIDRIRFTTSHPIEFTDDIIEVYRDTPELVSFLHLPVQSGSDRILNLMGRTHTALEYKAIIRKLRAARPDIQISSDFIVGFPGETTEDFEKTMKLIADVNFDMSYSFIFSARPGTPAADMVDDVPEEEKKQRLYILQERINQQAMAWSRRMLGTTQRILVEGTSRKSIMELSGRTENNRVVNFEGTPDMIGKFVDVEITDVYPNSLRGKVVRTEDEMGLRMAETPESVIARTRKENDLGVGYYQP</sequence>
<reference key="1">
    <citation type="journal article" date="2002" name="Nucleic Acids Res.">
        <title>Genome sequence of Shigella flexneri 2a: insights into pathogenicity through comparison with genomes of Escherichia coli K12 and O157.</title>
        <authorList>
            <person name="Jin Q."/>
            <person name="Yuan Z."/>
            <person name="Xu J."/>
            <person name="Wang Y."/>
            <person name="Shen Y."/>
            <person name="Lu W."/>
            <person name="Wang J."/>
            <person name="Liu H."/>
            <person name="Yang J."/>
            <person name="Yang F."/>
            <person name="Zhang X."/>
            <person name="Zhang J."/>
            <person name="Yang G."/>
            <person name="Wu H."/>
            <person name="Qu D."/>
            <person name="Dong J."/>
            <person name="Sun L."/>
            <person name="Xue Y."/>
            <person name="Zhao A."/>
            <person name="Gao Y."/>
            <person name="Zhu J."/>
            <person name="Kan B."/>
            <person name="Ding K."/>
            <person name="Chen S."/>
            <person name="Cheng H."/>
            <person name="Yao Z."/>
            <person name="He B."/>
            <person name="Chen R."/>
            <person name="Ma D."/>
            <person name="Qiang B."/>
            <person name="Wen Y."/>
            <person name="Hou Y."/>
            <person name="Yu J."/>
        </authorList>
    </citation>
    <scope>NUCLEOTIDE SEQUENCE [LARGE SCALE GENOMIC DNA]</scope>
    <source>
        <strain>301 / Serotype 2a</strain>
    </source>
</reference>
<reference key="2">
    <citation type="journal article" date="2003" name="Infect. Immun.">
        <title>Complete genome sequence and comparative genomics of Shigella flexneri serotype 2a strain 2457T.</title>
        <authorList>
            <person name="Wei J."/>
            <person name="Goldberg M.B."/>
            <person name="Burland V."/>
            <person name="Venkatesan M.M."/>
            <person name="Deng W."/>
            <person name="Fournier G."/>
            <person name="Mayhew G.F."/>
            <person name="Plunkett G. III"/>
            <person name="Rose D.J."/>
            <person name="Darling A."/>
            <person name="Mau B."/>
            <person name="Perna N.T."/>
            <person name="Payne S.M."/>
            <person name="Runyen-Janecky L.J."/>
            <person name="Zhou S."/>
            <person name="Schwartz D.C."/>
            <person name="Blattner F.R."/>
        </authorList>
    </citation>
    <scope>NUCLEOTIDE SEQUENCE [LARGE SCALE GENOMIC DNA]</scope>
    <source>
        <strain>ATCC 700930 / 2457T / Serotype 2a</strain>
    </source>
</reference>
<feature type="chain" id="PRO_0000374553" description="tRNA-2-methylthio-N(6)-dimethylallyladenosine synthase">
    <location>
        <begin position="1"/>
        <end position="474"/>
    </location>
</feature>
<feature type="domain" description="MTTase N-terminal" evidence="1">
    <location>
        <begin position="3"/>
        <end position="120"/>
    </location>
</feature>
<feature type="domain" description="Radical SAM core" evidence="2">
    <location>
        <begin position="143"/>
        <end position="375"/>
    </location>
</feature>
<feature type="domain" description="TRAM" evidence="1">
    <location>
        <begin position="378"/>
        <end position="441"/>
    </location>
</feature>
<feature type="binding site" evidence="1">
    <location>
        <position position="12"/>
    </location>
    <ligand>
        <name>[4Fe-4S] cluster</name>
        <dbReference type="ChEBI" id="CHEBI:49883"/>
        <label>1</label>
    </ligand>
</feature>
<feature type="binding site" evidence="1">
    <location>
        <position position="49"/>
    </location>
    <ligand>
        <name>[4Fe-4S] cluster</name>
        <dbReference type="ChEBI" id="CHEBI:49883"/>
        <label>1</label>
    </ligand>
</feature>
<feature type="binding site" evidence="1">
    <location>
        <position position="83"/>
    </location>
    <ligand>
        <name>[4Fe-4S] cluster</name>
        <dbReference type="ChEBI" id="CHEBI:49883"/>
        <label>1</label>
    </ligand>
</feature>
<feature type="binding site" evidence="1">
    <location>
        <position position="157"/>
    </location>
    <ligand>
        <name>[4Fe-4S] cluster</name>
        <dbReference type="ChEBI" id="CHEBI:49883"/>
        <label>2</label>
        <note>4Fe-4S-S-AdoMet</note>
    </ligand>
</feature>
<feature type="binding site" evidence="1">
    <location>
        <position position="161"/>
    </location>
    <ligand>
        <name>[4Fe-4S] cluster</name>
        <dbReference type="ChEBI" id="CHEBI:49883"/>
        <label>2</label>
        <note>4Fe-4S-S-AdoMet</note>
    </ligand>
</feature>
<feature type="binding site" evidence="1">
    <location>
        <position position="164"/>
    </location>
    <ligand>
        <name>[4Fe-4S] cluster</name>
        <dbReference type="ChEBI" id="CHEBI:49883"/>
        <label>2</label>
        <note>4Fe-4S-S-AdoMet</note>
    </ligand>
</feature>
<accession>Q83LY3</accession>
<accession>Q7C2M9</accession>
<gene>
    <name evidence="1" type="primary">miaB</name>
    <name type="ordered locus">SF0621</name>
    <name type="ordered locus">S0643</name>
</gene>
<keyword id="KW-0004">4Fe-4S</keyword>
<keyword id="KW-0963">Cytoplasm</keyword>
<keyword id="KW-0408">Iron</keyword>
<keyword id="KW-0411">Iron-sulfur</keyword>
<keyword id="KW-0479">Metal-binding</keyword>
<keyword id="KW-1185">Reference proteome</keyword>
<keyword id="KW-0949">S-adenosyl-L-methionine</keyword>
<keyword id="KW-0808">Transferase</keyword>
<keyword id="KW-0819">tRNA processing</keyword>
<comment type="function">
    <text evidence="1">Catalyzes the methylthiolation of N6-(dimethylallyl)adenosine (i(6)A), leading to the formation of 2-methylthio-N6-(dimethylallyl)adenosine (ms(2)i(6)A) at position 37 in tRNAs that read codons beginning with uridine.</text>
</comment>
<comment type="catalytic activity">
    <reaction evidence="1">
        <text>N(6)-dimethylallyladenosine(37) in tRNA + (sulfur carrier)-SH + AH2 + 2 S-adenosyl-L-methionine = 2-methylsulfanyl-N(6)-dimethylallyladenosine(37) in tRNA + (sulfur carrier)-H + 5'-deoxyadenosine + L-methionine + A + S-adenosyl-L-homocysteine + 2 H(+)</text>
        <dbReference type="Rhea" id="RHEA:37067"/>
        <dbReference type="Rhea" id="RHEA-COMP:10375"/>
        <dbReference type="Rhea" id="RHEA-COMP:10376"/>
        <dbReference type="Rhea" id="RHEA-COMP:14737"/>
        <dbReference type="Rhea" id="RHEA-COMP:14739"/>
        <dbReference type="ChEBI" id="CHEBI:13193"/>
        <dbReference type="ChEBI" id="CHEBI:15378"/>
        <dbReference type="ChEBI" id="CHEBI:17319"/>
        <dbReference type="ChEBI" id="CHEBI:17499"/>
        <dbReference type="ChEBI" id="CHEBI:29917"/>
        <dbReference type="ChEBI" id="CHEBI:57844"/>
        <dbReference type="ChEBI" id="CHEBI:57856"/>
        <dbReference type="ChEBI" id="CHEBI:59789"/>
        <dbReference type="ChEBI" id="CHEBI:64428"/>
        <dbReference type="ChEBI" id="CHEBI:74415"/>
        <dbReference type="ChEBI" id="CHEBI:74417"/>
        <dbReference type="EC" id="2.8.4.3"/>
    </reaction>
</comment>
<comment type="cofactor">
    <cofactor evidence="1">
        <name>[4Fe-4S] cluster</name>
        <dbReference type="ChEBI" id="CHEBI:49883"/>
    </cofactor>
    <text evidence="1">Binds 2 [4Fe-4S] clusters. One cluster is coordinated with 3 cysteines and an exchangeable S-adenosyl-L-methionine.</text>
</comment>
<comment type="subunit">
    <text evidence="1">Monomer.</text>
</comment>
<comment type="subcellular location">
    <subcellularLocation>
        <location evidence="1">Cytoplasm</location>
    </subcellularLocation>
</comment>
<comment type="similarity">
    <text evidence="1">Belongs to the methylthiotransferase family. MiaB subfamily.</text>
</comment>